<organism>
    <name type="scientific">Acinetobacter baumannii (strain ACICU)</name>
    <dbReference type="NCBI Taxonomy" id="405416"/>
    <lineage>
        <taxon>Bacteria</taxon>
        <taxon>Pseudomonadati</taxon>
        <taxon>Pseudomonadota</taxon>
        <taxon>Gammaproteobacteria</taxon>
        <taxon>Moraxellales</taxon>
        <taxon>Moraxellaceae</taxon>
        <taxon>Acinetobacter</taxon>
        <taxon>Acinetobacter calcoaceticus/baumannii complex</taxon>
    </lineage>
</organism>
<dbReference type="EC" id="4.3.1.18" evidence="1"/>
<dbReference type="EMBL" id="CP000863">
    <property type="protein sequence ID" value="ACC56247.1"/>
    <property type="molecule type" value="Genomic_DNA"/>
</dbReference>
<dbReference type="RefSeq" id="WP_000994873.1">
    <property type="nucleotide sequence ID" value="NZ_CP031380.1"/>
</dbReference>
<dbReference type="SMR" id="B2HVC6"/>
<dbReference type="KEGG" id="abc:ACICU_00935"/>
<dbReference type="HOGENOM" id="CLU_035707_0_0_6"/>
<dbReference type="Proteomes" id="UP000008839">
    <property type="component" value="Chromosome"/>
</dbReference>
<dbReference type="GO" id="GO:0008721">
    <property type="term" value="F:D-serine ammonia-lyase activity"/>
    <property type="evidence" value="ECO:0007669"/>
    <property type="project" value="UniProtKB-EC"/>
</dbReference>
<dbReference type="GO" id="GO:0016836">
    <property type="term" value="F:hydro-lyase activity"/>
    <property type="evidence" value="ECO:0007669"/>
    <property type="project" value="UniProtKB-UniRule"/>
</dbReference>
<dbReference type="GO" id="GO:0030170">
    <property type="term" value="F:pyridoxal phosphate binding"/>
    <property type="evidence" value="ECO:0007669"/>
    <property type="project" value="InterPro"/>
</dbReference>
<dbReference type="GO" id="GO:0036088">
    <property type="term" value="P:D-serine catabolic process"/>
    <property type="evidence" value="ECO:0007669"/>
    <property type="project" value="TreeGrafter"/>
</dbReference>
<dbReference type="GO" id="GO:0009097">
    <property type="term" value="P:isoleucine biosynthetic process"/>
    <property type="evidence" value="ECO:0007669"/>
    <property type="project" value="TreeGrafter"/>
</dbReference>
<dbReference type="CDD" id="cd06447">
    <property type="entry name" value="D-Ser-dehyd"/>
    <property type="match status" value="1"/>
</dbReference>
<dbReference type="FunFam" id="3.40.50.1100:FF:000018">
    <property type="entry name" value="D-serine dehydratase"/>
    <property type="match status" value="1"/>
</dbReference>
<dbReference type="Gene3D" id="3.40.50.1100">
    <property type="match status" value="2"/>
</dbReference>
<dbReference type="HAMAP" id="MF_01030">
    <property type="entry name" value="D_Ser_dehydrat"/>
    <property type="match status" value="1"/>
</dbReference>
<dbReference type="InterPro" id="IPR011780">
    <property type="entry name" value="D_Ser_am_lyase"/>
</dbReference>
<dbReference type="InterPro" id="IPR050147">
    <property type="entry name" value="Ser/Thr_Dehydratase"/>
</dbReference>
<dbReference type="InterPro" id="IPR000634">
    <property type="entry name" value="Ser/Thr_deHydtase_PyrdxlP-BS"/>
</dbReference>
<dbReference type="InterPro" id="IPR001926">
    <property type="entry name" value="TrpB-like_PALP"/>
</dbReference>
<dbReference type="InterPro" id="IPR036052">
    <property type="entry name" value="TrpB-like_PALP_sf"/>
</dbReference>
<dbReference type="NCBIfam" id="TIGR02035">
    <property type="entry name" value="D_Ser_am_lyase"/>
    <property type="match status" value="1"/>
</dbReference>
<dbReference type="NCBIfam" id="NF002823">
    <property type="entry name" value="PRK02991.1"/>
    <property type="match status" value="1"/>
</dbReference>
<dbReference type="PANTHER" id="PTHR48078:SF9">
    <property type="entry name" value="D-SERINE DEHYDRATASE"/>
    <property type="match status" value="1"/>
</dbReference>
<dbReference type="PANTHER" id="PTHR48078">
    <property type="entry name" value="THREONINE DEHYDRATASE, MITOCHONDRIAL-RELATED"/>
    <property type="match status" value="1"/>
</dbReference>
<dbReference type="Pfam" id="PF00291">
    <property type="entry name" value="PALP"/>
    <property type="match status" value="1"/>
</dbReference>
<dbReference type="SUPFAM" id="SSF53686">
    <property type="entry name" value="Tryptophan synthase beta subunit-like PLP-dependent enzymes"/>
    <property type="match status" value="1"/>
</dbReference>
<dbReference type="PROSITE" id="PS00165">
    <property type="entry name" value="DEHYDRATASE_SER_THR"/>
    <property type="match status" value="1"/>
</dbReference>
<protein>
    <recommendedName>
        <fullName evidence="1">Probable D-serine dehydratase</fullName>
        <ecNumber evidence="1">4.3.1.18</ecNumber>
    </recommendedName>
    <alternativeName>
        <fullName evidence="1">D-serine deaminase</fullName>
        <shortName evidence="1">DSD</shortName>
    </alternativeName>
</protein>
<feature type="chain" id="PRO_1000213343" description="Probable D-serine dehydratase">
    <location>
        <begin position="1"/>
        <end position="444"/>
    </location>
</feature>
<feature type="modified residue" description="N6-(pyridoxal phosphate)lysine" evidence="1">
    <location>
        <position position="118"/>
    </location>
</feature>
<sequence>MNAVQIDQLKQQFPLIETLQAYQETFWFNPHRYPLNEALAKVCLTEQDVKEAEARLARFAPYLAKVFPETQAQHGKIESALVEIAEMQQALSLQKHKTLTGKLWLKKDSHLPISGSIKARGGIYEVLAHAEKLAIEAGLLKLEDDYSKLDQDSFRTFFSKYQIAVGSTGNLGLSIGIMSAKLGFRVSVHMSADARQWKKDKLRSLGVNVVEYASDYGVAVEEGRKAAEQDPFCFFIDDENSTTLFLGYAVAGLRLKQQFEQKQIKVDADHPLFVYLPCGVGGGPGGVSFGLKLAFGEHVHCIFAEPTHSPCMLLGVYTGLHDQISVNDIGLDNITAADGLAVGRASGFVGRAMQQLIDGYYTIHDECLYELIALLNQTENIQVEPSAAAGMMGPYYVQTTPDYLALHQLSAEKLQHATHVVWATGGGMVPPDEMQKYLTYSQRN</sequence>
<gene>
    <name evidence="1" type="primary">dsdA</name>
    <name type="ordered locus">ACICU_00935</name>
</gene>
<evidence type="ECO:0000255" key="1">
    <source>
        <dbReference type="HAMAP-Rule" id="MF_01030"/>
    </source>
</evidence>
<comment type="catalytic activity">
    <reaction evidence="1">
        <text>D-serine = pyruvate + NH4(+)</text>
        <dbReference type="Rhea" id="RHEA:13977"/>
        <dbReference type="ChEBI" id="CHEBI:15361"/>
        <dbReference type="ChEBI" id="CHEBI:28938"/>
        <dbReference type="ChEBI" id="CHEBI:35247"/>
        <dbReference type="EC" id="4.3.1.18"/>
    </reaction>
</comment>
<comment type="cofactor">
    <cofactor evidence="1">
        <name>pyridoxal 5'-phosphate</name>
        <dbReference type="ChEBI" id="CHEBI:597326"/>
    </cofactor>
</comment>
<comment type="similarity">
    <text evidence="1">Belongs to the serine/threonine dehydratase family. DsdA subfamily.</text>
</comment>
<keyword id="KW-0456">Lyase</keyword>
<keyword id="KW-0663">Pyridoxal phosphate</keyword>
<name>SDHD_ACIBC</name>
<reference key="1">
    <citation type="journal article" date="2008" name="Antimicrob. Agents Chemother.">
        <title>Whole-genome pyrosequencing of an epidemic multidrug-resistant Acinetobacter baumannii strain belonging to the European clone II group.</title>
        <authorList>
            <person name="Iacono M."/>
            <person name="Villa L."/>
            <person name="Fortini D."/>
            <person name="Bordoni R."/>
            <person name="Imperi F."/>
            <person name="Bonnal R.J."/>
            <person name="Sicheritz-Ponten T."/>
            <person name="De Bellis G."/>
            <person name="Visca P."/>
            <person name="Cassone A."/>
            <person name="Carattoli A."/>
        </authorList>
    </citation>
    <scope>NUCLEOTIDE SEQUENCE [LARGE SCALE GENOMIC DNA]</scope>
    <source>
        <strain>ACICU</strain>
    </source>
</reference>
<proteinExistence type="inferred from homology"/>
<accession>B2HVC6</accession>